<dbReference type="EC" id="1.11.1.-"/>
<dbReference type="EMBL" id="AF031242">
    <property type="protein sequence ID" value="AAB86626.1"/>
    <property type="molecule type" value="Genomic_DNA"/>
</dbReference>
<dbReference type="RefSeq" id="WP_033354363.1">
    <property type="nucleotide sequence ID" value="NZ_CAMEOQ010000006.1"/>
</dbReference>
<dbReference type="PDB" id="1A7U">
    <property type="method" value="X-ray"/>
    <property type="resolution" value="1.75 A"/>
    <property type="chains" value="A/B=2-278"/>
</dbReference>
<dbReference type="PDB" id="1A8U">
    <property type="method" value="X-ray"/>
    <property type="resolution" value="1.60 A"/>
    <property type="chains" value="A/B=2-278"/>
</dbReference>
<dbReference type="PDBsum" id="1A7U"/>
<dbReference type="PDBsum" id="1A8U"/>
<dbReference type="SMR" id="O31168"/>
<dbReference type="DrugBank" id="DB03793">
    <property type="generic name" value="Benzoic acid"/>
</dbReference>
<dbReference type="ESTHER" id="strau-cpoT">
    <property type="family name" value="Haloperoxidase"/>
</dbReference>
<dbReference type="MEROPS" id="S33.991"/>
<dbReference type="PeroxiBase" id="5908">
    <property type="entry name" value="STaHalNPrx02"/>
</dbReference>
<dbReference type="EvolutionaryTrace" id="O31168"/>
<dbReference type="GO" id="GO:0016691">
    <property type="term" value="F:chloride peroxidase activity"/>
    <property type="evidence" value="ECO:0007669"/>
    <property type="project" value="UniProtKB-EC"/>
</dbReference>
<dbReference type="FunFam" id="3.40.50.1820:FF:000205">
    <property type="entry name" value="Non-haem bromoperoxidase BPO-A2"/>
    <property type="match status" value="1"/>
</dbReference>
<dbReference type="Gene3D" id="3.40.50.1820">
    <property type="entry name" value="alpha/beta hydrolase"/>
    <property type="match status" value="1"/>
</dbReference>
<dbReference type="InterPro" id="IPR050471">
    <property type="entry name" value="AB_hydrolase"/>
</dbReference>
<dbReference type="InterPro" id="IPR000073">
    <property type="entry name" value="AB_hydrolase_1"/>
</dbReference>
<dbReference type="InterPro" id="IPR029058">
    <property type="entry name" value="AB_hydrolase_fold"/>
</dbReference>
<dbReference type="InterPro" id="IPR000639">
    <property type="entry name" value="Epox_hydrolase-like"/>
</dbReference>
<dbReference type="PANTHER" id="PTHR43433">
    <property type="entry name" value="HYDROLASE, ALPHA/BETA FOLD FAMILY PROTEIN"/>
    <property type="match status" value="1"/>
</dbReference>
<dbReference type="PANTHER" id="PTHR43433:SF4">
    <property type="entry name" value="NON-HEME CHLOROPEROXIDASE-RELATED"/>
    <property type="match status" value="1"/>
</dbReference>
<dbReference type="Pfam" id="PF00561">
    <property type="entry name" value="Abhydrolase_1"/>
    <property type="match status" value="1"/>
</dbReference>
<dbReference type="PRINTS" id="PR00111">
    <property type="entry name" value="ABHYDROLASE"/>
</dbReference>
<dbReference type="PRINTS" id="PR00412">
    <property type="entry name" value="EPOXHYDRLASE"/>
</dbReference>
<dbReference type="SUPFAM" id="SSF53474">
    <property type="entry name" value="alpha/beta-Hydrolases"/>
    <property type="match status" value="1"/>
</dbReference>
<keyword id="KW-0002">3D-structure</keyword>
<keyword id="KW-0868">Chloride</keyword>
<keyword id="KW-0560">Oxidoreductase</keyword>
<keyword id="KW-0575">Peroxidase</keyword>
<reference key="1">
    <citation type="submission" date="1997-10" db="EMBL/GenBank/DDBJ databases">
        <authorList>
            <person name="Pelletier I."/>
            <person name="Altenbuchner J."/>
            <person name="van Pee K.-H."/>
        </authorList>
    </citation>
    <scope>NUCLEOTIDE SEQUENCE [GENOMIC DNA]</scope>
    <source>
        <strain>Tu24</strain>
    </source>
</reference>
<reference key="2">
    <citation type="journal article" date="1998" name="J. Mol. Biol.">
        <title>Structural investigation of the cofactor-free chloroperoxidases.</title>
        <authorList>
            <person name="Hofmann B."/>
            <person name="Tolzer S."/>
            <person name="Pelletier I."/>
            <person name="Altenbuchner J."/>
            <person name="van Pee K.-H."/>
            <person name="Hecht H.-J."/>
        </authorList>
    </citation>
    <scope>X-RAY CRYSTALLOGRAPHY (1.75 ANGSTROMS)</scope>
    <source>
        <strain>Tu24</strain>
    </source>
</reference>
<proteinExistence type="evidence at protein level"/>
<name>PRXC_KITAU</name>
<comment type="subunit">
    <text>Homodimer.</text>
</comment>
<comment type="similarity">
    <text evidence="3">Belongs to the AB hydrolase superfamily. Bacterial non-heme haloperoxidase / perhydrolase family.</text>
</comment>
<gene>
    <name type="primary">cpo</name>
    <name type="synonym">cpoT</name>
</gene>
<feature type="chain" id="PRO_0000207062" description="Non-heme chloroperoxidase">
    <location>
        <begin position="1"/>
        <end position="278"/>
    </location>
</feature>
<feature type="domain" description="AB hydrolase-1" evidence="2">
    <location>
        <begin position="26"/>
        <end position="264"/>
    </location>
</feature>
<feature type="active site" evidence="1">
    <location>
        <position position="99"/>
    </location>
</feature>
<feature type="active site" evidence="1">
    <location>
        <position position="229"/>
    </location>
</feature>
<feature type="active site" evidence="1">
    <location>
        <position position="258"/>
    </location>
</feature>
<feature type="strand" evidence="4">
    <location>
        <begin position="3"/>
        <end position="9"/>
    </location>
</feature>
<feature type="strand" evidence="4">
    <location>
        <begin position="12"/>
        <end position="22"/>
    </location>
</feature>
<feature type="strand" evidence="4">
    <location>
        <begin position="24"/>
        <end position="30"/>
    </location>
</feature>
<feature type="helix" evidence="4">
    <location>
        <begin position="37"/>
        <end position="40"/>
    </location>
</feature>
<feature type="helix" evidence="4">
    <location>
        <begin position="41"/>
        <end position="49"/>
    </location>
</feature>
<feature type="strand" evidence="4">
    <location>
        <begin position="53"/>
        <end position="57"/>
    </location>
</feature>
<feature type="helix" evidence="4">
    <location>
        <begin position="74"/>
        <end position="88"/>
    </location>
</feature>
<feature type="strand" evidence="4">
    <location>
        <begin position="92"/>
        <end position="98"/>
    </location>
</feature>
<feature type="helix" evidence="4">
    <location>
        <begin position="100"/>
        <end position="112"/>
    </location>
</feature>
<feature type="strand" evidence="4">
    <location>
        <begin position="117"/>
        <end position="124"/>
    </location>
</feature>
<feature type="strand" evidence="4">
    <location>
        <begin position="139"/>
        <end position="141"/>
    </location>
</feature>
<feature type="helix" evidence="4">
    <location>
        <begin position="143"/>
        <end position="155"/>
    </location>
</feature>
<feature type="helix" evidence="4">
    <location>
        <begin position="157"/>
        <end position="168"/>
    </location>
</feature>
<feature type="helix" evidence="4">
    <location>
        <begin position="171"/>
        <end position="174"/>
    </location>
</feature>
<feature type="turn" evidence="4">
    <location>
        <begin position="176"/>
        <end position="178"/>
    </location>
</feature>
<feature type="helix" evidence="4">
    <location>
        <begin position="181"/>
        <end position="193"/>
    </location>
</feature>
<feature type="helix" evidence="4">
    <location>
        <begin position="196"/>
        <end position="205"/>
    </location>
</feature>
<feature type="turn" evidence="4">
    <location>
        <begin position="211"/>
        <end position="213"/>
    </location>
</feature>
<feature type="helix" evidence="4">
    <location>
        <begin position="214"/>
        <end position="216"/>
    </location>
</feature>
<feature type="strand" evidence="4">
    <location>
        <begin position="221"/>
        <end position="226"/>
    </location>
</feature>
<feature type="strand" evidence="4">
    <location>
        <begin position="230"/>
        <end position="232"/>
    </location>
</feature>
<feature type="helix" evidence="4">
    <location>
        <begin position="234"/>
        <end position="236"/>
    </location>
</feature>
<feature type="helix" evidence="4">
    <location>
        <begin position="238"/>
        <end position="244"/>
    </location>
</feature>
<feature type="strand" evidence="4">
    <location>
        <begin position="248"/>
        <end position="253"/>
    </location>
</feature>
<feature type="helix" evidence="4">
    <location>
        <begin position="260"/>
        <end position="263"/>
    </location>
</feature>
<feature type="helix" evidence="4">
    <location>
        <begin position="265"/>
        <end position="277"/>
    </location>
</feature>
<sequence>MPFITVGQENSTSIDLYYEDHGAGQPVVLIHGFPLSGHSWERQSAALLDAGYRVITYDRRGFGQSSQPTTGYDYDTFAADLNTVLETLDLQDAVLVGFSMGTGEVARYVSSYGTARIAKVAFLASLEPFLLKTDDNPDGAAPKEFFDGIVAAVKADRYAFYTGFFNDFYNLDENLGTRISEEAVRNSWNTAASGGFFAAAAAPTTWYTDFRADIPRIDVPALILHGTGDRTLPIENTARVFHKALPSAEYVEVEGAPHGLLWTHAEEVNTALLAFLAK</sequence>
<protein>
    <recommendedName>
        <fullName>Non-heme chloroperoxidase</fullName>
        <ecNumber>1.11.1.-</ecNumber>
    </recommendedName>
    <alternativeName>
        <fullName>Chloride peroxidase</fullName>
    </alternativeName>
    <alternativeName>
        <fullName>Chloroperoxidase T</fullName>
        <shortName>CPO-T</shortName>
    </alternativeName>
</protein>
<organism>
    <name type="scientific">Kitasatospora aureofaciens</name>
    <name type="common">Streptomyces aureofaciens</name>
    <dbReference type="NCBI Taxonomy" id="1894"/>
    <lineage>
        <taxon>Bacteria</taxon>
        <taxon>Bacillati</taxon>
        <taxon>Actinomycetota</taxon>
        <taxon>Actinomycetes</taxon>
        <taxon>Kitasatosporales</taxon>
        <taxon>Streptomycetaceae</taxon>
        <taxon>Kitasatospora</taxon>
    </lineage>
</organism>
<accession>O31168</accession>
<evidence type="ECO:0000250" key="1">
    <source>
        <dbReference type="UniProtKB" id="P22862"/>
    </source>
</evidence>
<evidence type="ECO:0000255" key="2"/>
<evidence type="ECO:0000305" key="3"/>
<evidence type="ECO:0007829" key="4">
    <source>
        <dbReference type="PDB" id="1A8U"/>
    </source>
</evidence>